<organism>
    <name type="scientific">Mus musculus</name>
    <name type="common">Mouse</name>
    <dbReference type="NCBI Taxonomy" id="10090"/>
    <lineage>
        <taxon>Eukaryota</taxon>
        <taxon>Metazoa</taxon>
        <taxon>Chordata</taxon>
        <taxon>Craniata</taxon>
        <taxon>Vertebrata</taxon>
        <taxon>Euteleostomi</taxon>
        <taxon>Mammalia</taxon>
        <taxon>Eutheria</taxon>
        <taxon>Euarchontoglires</taxon>
        <taxon>Glires</taxon>
        <taxon>Rodentia</taxon>
        <taxon>Myomorpha</taxon>
        <taxon>Muroidea</taxon>
        <taxon>Muridae</taxon>
        <taxon>Murinae</taxon>
        <taxon>Mus</taxon>
        <taxon>Mus</taxon>
    </lineage>
</organism>
<name>JAZF1_MOUSE</name>
<evidence type="ECO:0000250" key="1">
    <source>
        <dbReference type="UniProtKB" id="Q86VZ6"/>
    </source>
</evidence>
<evidence type="ECO:0000256" key="2">
    <source>
        <dbReference type="SAM" id="MobiDB-lite"/>
    </source>
</evidence>
<evidence type="ECO:0000269" key="3">
    <source>
    </source>
</evidence>
<evidence type="ECO:0000269" key="4">
    <source>
    </source>
</evidence>
<evidence type="ECO:0000269" key="5">
    <source>
    </source>
</evidence>
<evidence type="ECO:0000303" key="6">
    <source>
    </source>
</evidence>
<evidence type="ECO:0000305" key="7"/>
<evidence type="ECO:0007744" key="8">
    <source>
    </source>
</evidence>
<proteinExistence type="evidence at protein level"/>
<comment type="function">
    <text evidence="1 3 4 5">Acts as a transcriptional corepressor of orphan nuclear receptor NR2C2 (By similarity). Inhibits expression of the gluconeogenesis enzyme PCK2 through inhibition of NR2C2 activity (PubMed:24380856). Also involved in transcriptional activation of NAMPT by promoting expression of PPARA and PPARD (PubMed:24930994). Plays a role in lipid metabolism by suppressing lipogenesis, increasing lipolysis and decreasing lipid accumulation in adipose tissue (PubMed:24380856, PubMed:25614086). Plays a role in glucose homeostasis by improving glucose metabolism and insulin sensitivity (PubMed:24380856, PubMed:25614086).</text>
</comment>
<comment type="subunit">
    <text evidence="1">Interacts with NR2C2 (via ligand-binding region).</text>
</comment>
<comment type="subcellular location">
    <subcellularLocation>
        <location evidence="1">Nucleus</location>
    </subcellularLocation>
</comment>
<comment type="alternative products">
    <event type="alternative splicing"/>
    <isoform>
        <id>Q80ZQ5-1</id>
        <name>1</name>
        <sequence type="displayed"/>
    </isoform>
    <isoform>
        <id>Q80ZQ5-2</id>
        <name>2</name>
        <sequence type="described" ref="VSP_007756"/>
    </isoform>
</comment>
<comment type="tissue specificity">
    <text evidence="3 5">Expressed in range of tissues with highest expression levels in testis, liver, muscle and fat and lowest levels in kidney (PubMed:25614086). Detected in liver and white adipose tissue (at protein level) (PubMed:24380856).</text>
</comment>
<comment type="developmental stage">
    <text evidence="4">Expression is gradually but significantly up-regulated during adipocyte differentiation.</text>
</comment>
<sequence length="243" mass="27098">MTGIAAASFFSNTCRFGGCGLHFPTLADLIEHIEDNHIDTDPRVLEKQELQQPTYVALSYINRFMTDAARREQESLKKKIQPKLSLTLSSSVSRGNVSTPPRHSSGSLTPPVTPPITPSSSFRSSTPTGSEYDEEEVDYEESDSDESWTTESAISSEAILSSMCMNGGEEKPFACPVPGCKKRYKNVNGIKYHAKNGHRTQIRVRKPFKCRCGKSYKTAQGLRHHTINFHPPVSAEMIRKMQQ</sequence>
<feature type="chain" id="PRO_0000046986" description="Juxtaposed with another zinc finger protein 1">
    <location>
        <begin position="1"/>
        <end position="243"/>
    </location>
</feature>
<feature type="zinc finger region" description="C2H2-type 1">
    <location>
        <begin position="12"/>
        <end position="37"/>
    </location>
</feature>
<feature type="zinc finger region" description="C2H2-type 2">
    <location>
        <begin position="173"/>
        <end position="198"/>
    </location>
</feature>
<feature type="zinc finger region" description="C2H2-type 3; degenerate">
    <location>
        <begin position="208"/>
        <end position="230"/>
    </location>
</feature>
<feature type="region of interest" description="Required for interaction with NR2C2" evidence="1">
    <location>
        <begin position="39"/>
        <end position="79"/>
    </location>
</feature>
<feature type="region of interest" description="Disordered" evidence="2">
    <location>
        <begin position="89"/>
        <end position="151"/>
    </location>
</feature>
<feature type="compositionally biased region" description="Polar residues" evidence="2">
    <location>
        <begin position="89"/>
        <end position="108"/>
    </location>
</feature>
<feature type="compositionally biased region" description="Low complexity" evidence="2">
    <location>
        <begin position="118"/>
        <end position="130"/>
    </location>
</feature>
<feature type="compositionally biased region" description="Acidic residues" evidence="2">
    <location>
        <begin position="131"/>
        <end position="148"/>
    </location>
</feature>
<feature type="modified residue" description="Phosphothreonine" evidence="8">
    <location>
        <position position="109"/>
    </location>
</feature>
<feature type="modified residue" description="Phosphothreonine" evidence="8">
    <location>
        <position position="113"/>
    </location>
</feature>
<feature type="splice variant" id="VSP_007756" description="In isoform 2." evidence="6">
    <location>
        <position position="64"/>
    </location>
</feature>
<feature type="sequence conflict" description="In Ref. 1; BAC34275." evidence="7" ref="1">
    <original>R</original>
    <variation>L</variation>
    <location>
        <position position="211"/>
    </location>
</feature>
<reference key="1">
    <citation type="journal article" date="2005" name="Science">
        <title>The transcriptional landscape of the mammalian genome.</title>
        <authorList>
            <person name="Carninci P."/>
            <person name="Kasukawa T."/>
            <person name="Katayama S."/>
            <person name="Gough J."/>
            <person name="Frith M.C."/>
            <person name="Maeda N."/>
            <person name="Oyama R."/>
            <person name="Ravasi T."/>
            <person name="Lenhard B."/>
            <person name="Wells C."/>
            <person name="Kodzius R."/>
            <person name="Shimokawa K."/>
            <person name="Bajic V.B."/>
            <person name="Brenner S.E."/>
            <person name="Batalov S."/>
            <person name="Forrest A.R."/>
            <person name="Zavolan M."/>
            <person name="Davis M.J."/>
            <person name="Wilming L.G."/>
            <person name="Aidinis V."/>
            <person name="Allen J.E."/>
            <person name="Ambesi-Impiombato A."/>
            <person name="Apweiler R."/>
            <person name="Aturaliya R.N."/>
            <person name="Bailey T.L."/>
            <person name="Bansal M."/>
            <person name="Baxter L."/>
            <person name="Beisel K.W."/>
            <person name="Bersano T."/>
            <person name="Bono H."/>
            <person name="Chalk A.M."/>
            <person name="Chiu K.P."/>
            <person name="Choudhary V."/>
            <person name="Christoffels A."/>
            <person name="Clutterbuck D.R."/>
            <person name="Crowe M.L."/>
            <person name="Dalla E."/>
            <person name="Dalrymple B.P."/>
            <person name="de Bono B."/>
            <person name="Della Gatta G."/>
            <person name="di Bernardo D."/>
            <person name="Down T."/>
            <person name="Engstrom P."/>
            <person name="Fagiolini M."/>
            <person name="Faulkner G."/>
            <person name="Fletcher C.F."/>
            <person name="Fukushima T."/>
            <person name="Furuno M."/>
            <person name="Futaki S."/>
            <person name="Gariboldi M."/>
            <person name="Georgii-Hemming P."/>
            <person name="Gingeras T.R."/>
            <person name="Gojobori T."/>
            <person name="Green R.E."/>
            <person name="Gustincich S."/>
            <person name="Harbers M."/>
            <person name="Hayashi Y."/>
            <person name="Hensch T.K."/>
            <person name="Hirokawa N."/>
            <person name="Hill D."/>
            <person name="Huminiecki L."/>
            <person name="Iacono M."/>
            <person name="Ikeo K."/>
            <person name="Iwama A."/>
            <person name="Ishikawa T."/>
            <person name="Jakt M."/>
            <person name="Kanapin A."/>
            <person name="Katoh M."/>
            <person name="Kawasawa Y."/>
            <person name="Kelso J."/>
            <person name="Kitamura H."/>
            <person name="Kitano H."/>
            <person name="Kollias G."/>
            <person name="Krishnan S.P."/>
            <person name="Kruger A."/>
            <person name="Kummerfeld S.K."/>
            <person name="Kurochkin I.V."/>
            <person name="Lareau L.F."/>
            <person name="Lazarevic D."/>
            <person name="Lipovich L."/>
            <person name="Liu J."/>
            <person name="Liuni S."/>
            <person name="McWilliam S."/>
            <person name="Madan Babu M."/>
            <person name="Madera M."/>
            <person name="Marchionni L."/>
            <person name="Matsuda H."/>
            <person name="Matsuzawa S."/>
            <person name="Miki H."/>
            <person name="Mignone F."/>
            <person name="Miyake S."/>
            <person name="Morris K."/>
            <person name="Mottagui-Tabar S."/>
            <person name="Mulder N."/>
            <person name="Nakano N."/>
            <person name="Nakauchi H."/>
            <person name="Ng P."/>
            <person name="Nilsson R."/>
            <person name="Nishiguchi S."/>
            <person name="Nishikawa S."/>
            <person name="Nori F."/>
            <person name="Ohara O."/>
            <person name="Okazaki Y."/>
            <person name="Orlando V."/>
            <person name="Pang K.C."/>
            <person name="Pavan W.J."/>
            <person name="Pavesi G."/>
            <person name="Pesole G."/>
            <person name="Petrovsky N."/>
            <person name="Piazza S."/>
            <person name="Reed J."/>
            <person name="Reid J.F."/>
            <person name="Ring B.Z."/>
            <person name="Ringwald M."/>
            <person name="Rost B."/>
            <person name="Ruan Y."/>
            <person name="Salzberg S.L."/>
            <person name="Sandelin A."/>
            <person name="Schneider C."/>
            <person name="Schoenbach C."/>
            <person name="Sekiguchi K."/>
            <person name="Semple C.A."/>
            <person name="Seno S."/>
            <person name="Sessa L."/>
            <person name="Sheng Y."/>
            <person name="Shibata Y."/>
            <person name="Shimada H."/>
            <person name="Shimada K."/>
            <person name="Silva D."/>
            <person name="Sinclair B."/>
            <person name="Sperling S."/>
            <person name="Stupka E."/>
            <person name="Sugiura K."/>
            <person name="Sultana R."/>
            <person name="Takenaka Y."/>
            <person name="Taki K."/>
            <person name="Tammoja K."/>
            <person name="Tan S.L."/>
            <person name="Tang S."/>
            <person name="Taylor M.S."/>
            <person name="Tegner J."/>
            <person name="Teichmann S.A."/>
            <person name="Ueda H.R."/>
            <person name="van Nimwegen E."/>
            <person name="Verardo R."/>
            <person name="Wei C.L."/>
            <person name="Yagi K."/>
            <person name="Yamanishi H."/>
            <person name="Zabarovsky E."/>
            <person name="Zhu S."/>
            <person name="Zimmer A."/>
            <person name="Hide W."/>
            <person name="Bult C."/>
            <person name="Grimmond S.M."/>
            <person name="Teasdale R.D."/>
            <person name="Liu E.T."/>
            <person name="Brusic V."/>
            <person name="Quackenbush J."/>
            <person name="Wahlestedt C."/>
            <person name="Mattick J.S."/>
            <person name="Hume D.A."/>
            <person name="Kai C."/>
            <person name="Sasaki D."/>
            <person name="Tomaru Y."/>
            <person name="Fukuda S."/>
            <person name="Kanamori-Katayama M."/>
            <person name="Suzuki M."/>
            <person name="Aoki J."/>
            <person name="Arakawa T."/>
            <person name="Iida J."/>
            <person name="Imamura K."/>
            <person name="Itoh M."/>
            <person name="Kato T."/>
            <person name="Kawaji H."/>
            <person name="Kawagashira N."/>
            <person name="Kawashima T."/>
            <person name="Kojima M."/>
            <person name="Kondo S."/>
            <person name="Konno H."/>
            <person name="Nakano K."/>
            <person name="Ninomiya N."/>
            <person name="Nishio T."/>
            <person name="Okada M."/>
            <person name="Plessy C."/>
            <person name="Shibata K."/>
            <person name="Shiraki T."/>
            <person name="Suzuki S."/>
            <person name="Tagami M."/>
            <person name="Waki K."/>
            <person name="Watahiki A."/>
            <person name="Okamura-Oho Y."/>
            <person name="Suzuki H."/>
            <person name="Kawai J."/>
            <person name="Hayashizaki Y."/>
        </authorList>
    </citation>
    <scope>NUCLEOTIDE SEQUENCE [LARGE SCALE MRNA] (ISOFORM 1)</scope>
    <source>
        <strain>C57BL/6J</strain>
        <tissue>Brain cortex</tissue>
        <tissue>Pancreas</tissue>
    </source>
</reference>
<reference key="2">
    <citation type="journal article" date="2004" name="Genome Res.">
        <title>The status, quality, and expansion of the NIH full-length cDNA project: the Mammalian Gene Collection (MGC).</title>
        <authorList>
            <consortium name="The MGC Project Team"/>
        </authorList>
    </citation>
    <scope>NUCLEOTIDE SEQUENCE [LARGE SCALE MRNA] (ISOFORM 2)</scope>
    <source>
        <tissue>Testis</tissue>
    </source>
</reference>
<reference key="3">
    <citation type="journal article" date="2010" name="Cell">
        <title>A tissue-specific atlas of mouse protein phosphorylation and expression.</title>
        <authorList>
            <person name="Huttlin E.L."/>
            <person name="Jedrychowski M.P."/>
            <person name="Elias J.E."/>
            <person name="Goswami T."/>
            <person name="Rad R."/>
            <person name="Beausoleil S.A."/>
            <person name="Villen J."/>
            <person name="Haas W."/>
            <person name="Sowa M.E."/>
            <person name="Gygi S.P."/>
        </authorList>
    </citation>
    <scope>PHOSPHORYLATION [LARGE SCALE ANALYSIS] AT THR-109 AND THR-113</scope>
    <scope>IDENTIFICATION BY MASS SPECTROMETRY [LARGE SCALE ANALYSIS]</scope>
    <source>
        <tissue>Brain</tissue>
    </source>
</reference>
<reference key="4">
    <citation type="journal article" date="2014" name="Biochem. Biophys. Res. Commun.">
        <title>Overexpression of Jazf1 reduces body weight gain and regulates lipid metabolism in high fat diet.</title>
        <authorList>
            <person name="Jang W.Y."/>
            <person name="Bae K.B."/>
            <person name="Kim S.H."/>
            <person name="Yu D.H."/>
            <person name="Kim H.J."/>
            <person name="Ji Y.R."/>
            <person name="Park S.J."/>
            <person name="Park S.J."/>
            <person name="Kang M.C."/>
            <person name="Jeong J.I."/>
            <person name="Park S.J."/>
            <person name="Lee S.G."/>
            <person name="Lee I."/>
            <person name="Kim M.O."/>
            <person name="Yoon D."/>
            <person name="Ryoo Z.Y."/>
        </authorList>
    </citation>
    <scope>FUNCTION</scope>
    <scope>TISSUE SPECIFICITY</scope>
</reference>
<reference key="5">
    <citation type="journal article" date="2014" name="Metabolism">
        <title>JAZF1 regulates visfatin expression in adipocytes via PPARalpha and PPARbeta/delta signaling.</title>
        <authorList>
            <person name="Ming G.F."/>
            <person name="Li X."/>
            <person name="Yin J.Y."/>
            <person name="Ai Y.H."/>
            <person name="Xu D.M."/>
            <person name="Ma X.H."/>
            <person name="Liu Z.Y."/>
            <person name="Liu H.X."/>
            <person name="Zhou H.H."/>
            <person name="Liu Z.Q."/>
        </authorList>
    </citation>
    <scope>FUNCTION</scope>
    <scope>DEVELOPMENTAL STAGE</scope>
</reference>
<reference key="6">
    <citation type="journal article" date="2015" name="Int. J. Obes. Relat. Metab. Disord.">
        <title>Transcription factor TIP27 regulates glucose homeostasis and insulin sensitivity in a PI3-kinase/Akt-dependent manner in mice.</title>
        <authorList>
            <person name="Yuan L."/>
            <person name="Luo X."/>
            <person name="Zeng M."/>
            <person name="Zhang Y."/>
            <person name="Yang M."/>
            <person name="Zhang L."/>
            <person name="Liu R."/>
            <person name="Boden G."/>
            <person name="Liu H."/>
            <person name="Ma Z.A."/>
            <person name="Li L."/>
            <person name="Yang G."/>
        </authorList>
    </citation>
    <scope>FUNCTION</scope>
    <scope>TISSUE SPECIFICITY</scope>
</reference>
<dbReference type="EMBL" id="AK043767">
    <property type="protein sequence ID" value="BAC31649.1"/>
    <property type="molecule type" value="mRNA"/>
</dbReference>
<dbReference type="EMBL" id="AK050474">
    <property type="protein sequence ID" value="BAC34275.1"/>
    <property type="molecule type" value="mRNA"/>
</dbReference>
<dbReference type="EMBL" id="BC048577">
    <property type="protein sequence ID" value="AAH48577.1"/>
    <property type="molecule type" value="mRNA"/>
</dbReference>
<dbReference type="CCDS" id="CCDS20152.1">
    <molecule id="Q80ZQ5-1"/>
</dbReference>
<dbReference type="RefSeq" id="NP_001161749.1">
    <property type="nucleotide sequence ID" value="NM_001168277.1"/>
</dbReference>
<dbReference type="RefSeq" id="NP_775582.2">
    <molecule id="Q80ZQ5-1"/>
    <property type="nucleotide sequence ID" value="NM_173406.4"/>
</dbReference>
<dbReference type="RefSeq" id="XP_011239597.1">
    <property type="nucleotide sequence ID" value="XM_011241295.2"/>
</dbReference>
<dbReference type="FunCoup" id="Q80ZQ5">
    <property type="interactions" value="1668"/>
</dbReference>
<dbReference type="STRING" id="10090.ENSMUSP00000074129"/>
<dbReference type="GlyGen" id="Q80ZQ5">
    <property type="glycosylation" value="2 sites, 1 N-linked glycan (1 site)"/>
</dbReference>
<dbReference type="iPTMnet" id="Q80ZQ5"/>
<dbReference type="PhosphoSitePlus" id="Q80ZQ5"/>
<dbReference type="PaxDb" id="10090-ENSMUSP00000074129"/>
<dbReference type="ProteomicsDB" id="268908">
    <molecule id="Q80ZQ5-1"/>
</dbReference>
<dbReference type="ProteomicsDB" id="268909">
    <molecule id="Q80ZQ5-2"/>
</dbReference>
<dbReference type="Antibodypedia" id="26034">
    <property type="antibodies" value="126 antibodies from 23 providers"/>
</dbReference>
<dbReference type="DNASU" id="231986"/>
<dbReference type="Ensembl" id="ENSMUST00000074541.6">
    <molecule id="Q80ZQ5-1"/>
    <property type="protein sequence ID" value="ENSMUSP00000074129.6"/>
    <property type="gene ID" value="ENSMUSG00000063568.12"/>
</dbReference>
<dbReference type="GeneID" id="231986"/>
<dbReference type="KEGG" id="mmu:231986"/>
<dbReference type="UCSC" id="uc009bza.2">
    <molecule id="Q80ZQ5-1"/>
    <property type="organism name" value="mouse"/>
</dbReference>
<dbReference type="AGR" id="MGI:2141450"/>
<dbReference type="CTD" id="221895"/>
<dbReference type="MGI" id="MGI:2141450">
    <property type="gene designation" value="Jazf1"/>
</dbReference>
<dbReference type="VEuPathDB" id="HostDB:ENSMUSG00000063568"/>
<dbReference type="eggNOG" id="KOG4124">
    <property type="taxonomic scope" value="Eukaryota"/>
</dbReference>
<dbReference type="GeneTree" id="ENSGT00390000003635"/>
<dbReference type="HOGENOM" id="CLU_077501_0_0_1"/>
<dbReference type="InParanoid" id="Q80ZQ5"/>
<dbReference type="OMA" id="CLWHGCG"/>
<dbReference type="OrthoDB" id="3269380at2759"/>
<dbReference type="PhylomeDB" id="Q80ZQ5"/>
<dbReference type="TreeFam" id="TF324161"/>
<dbReference type="BioGRID-ORCS" id="231986">
    <property type="hits" value="2 hits in 80 CRISPR screens"/>
</dbReference>
<dbReference type="ChiTaRS" id="Jazf1">
    <property type="organism name" value="mouse"/>
</dbReference>
<dbReference type="PRO" id="PR:Q80ZQ5"/>
<dbReference type="Proteomes" id="UP000000589">
    <property type="component" value="Chromosome 6"/>
</dbReference>
<dbReference type="RNAct" id="Q80ZQ5">
    <property type="molecule type" value="protein"/>
</dbReference>
<dbReference type="Bgee" id="ENSMUSG00000063568">
    <property type="expression patterns" value="Expressed in animal zygote and 211 other cell types or tissues"/>
</dbReference>
<dbReference type="GO" id="GO:0005829">
    <property type="term" value="C:cytosol"/>
    <property type="evidence" value="ECO:0007669"/>
    <property type="project" value="Ensembl"/>
</dbReference>
<dbReference type="GO" id="GO:0001650">
    <property type="term" value="C:fibrillar center"/>
    <property type="evidence" value="ECO:0007669"/>
    <property type="project" value="Ensembl"/>
</dbReference>
<dbReference type="GO" id="GO:0005654">
    <property type="term" value="C:nucleoplasm"/>
    <property type="evidence" value="ECO:0007669"/>
    <property type="project" value="Ensembl"/>
</dbReference>
<dbReference type="GO" id="GO:0017053">
    <property type="term" value="C:transcription repressor complex"/>
    <property type="evidence" value="ECO:0000266"/>
    <property type="project" value="MGI"/>
</dbReference>
<dbReference type="GO" id="GO:0003714">
    <property type="term" value="F:transcription corepressor activity"/>
    <property type="evidence" value="ECO:0000266"/>
    <property type="project" value="MGI"/>
</dbReference>
<dbReference type="GO" id="GO:0008270">
    <property type="term" value="F:zinc ion binding"/>
    <property type="evidence" value="ECO:0007669"/>
    <property type="project" value="UniProtKB-KW"/>
</dbReference>
<dbReference type="GO" id="GO:0006629">
    <property type="term" value="P:lipid metabolic process"/>
    <property type="evidence" value="ECO:0007669"/>
    <property type="project" value="UniProtKB-KW"/>
</dbReference>
<dbReference type="GO" id="GO:0000122">
    <property type="term" value="P:negative regulation of transcription by RNA polymerase II"/>
    <property type="evidence" value="ECO:0000266"/>
    <property type="project" value="MGI"/>
</dbReference>
<dbReference type="FunFam" id="3.30.160.60:FF:003264">
    <property type="entry name" value="Juxtaposed with another zinc finger protein 1"/>
    <property type="match status" value="1"/>
</dbReference>
<dbReference type="FunFam" id="3.30.160.60:FF:000619">
    <property type="entry name" value="juxtaposed with another zinc finger protein 1"/>
    <property type="match status" value="1"/>
</dbReference>
<dbReference type="Gene3D" id="3.30.160.60">
    <property type="entry name" value="Classic Zinc Finger"/>
    <property type="match status" value="2"/>
</dbReference>
<dbReference type="InterPro" id="IPR051580">
    <property type="entry name" value="ZnF-Chromatin_assoc"/>
</dbReference>
<dbReference type="InterPro" id="IPR036236">
    <property type="entry name" value="Znf_C2H2_sf"/>
</dbReference>
<dbReference type="InterPro" id="IPR013087">
    <property type="entry name" value="Znf_C2H2_type"/>
</dbReference>
<dbReference type="PANTHER" id="PTHR23057">
    <property type="entry name" value="JUXTAPOSED WITH ANOTHER ZINC FINGER PROTEIN 1"/>
    <property type="match status" value="1"/>
</dbReference>
<dbReference type="PANTHER" id="PTHR23057:SF0">
    <property type="entry name" value="JUXTAPOSED WITH ANOTHER ZINC FINGER PROTEIN 1"/>
    <property type="match status" value="1"/>
</dbReference>
<dbReference type="SMART" id="SM00355">
    <property type="entry name" value="ZnF_C2H2"/>
    <property type="match status" value="3"/>
</dbReference>
<dbReference type="SUPFAM" id="SSF57667">
    <property type="entry name" value="beta-beta-alpha zinc fingers"/>
    <property type="match status" value="1"/>
</dbReference>
<dbReference type="PROSITE" id="PS00028">
    <property type="entry name" value="ZINC_FINGER_C2H2_1"/>
    <property type="match status" value="2"/>
</dbReference>
<keyword id="KW-0025">Alternative splicing</keyword>
<keyword id="KW-0443">Lipid metabolism</keyword>
<keyword id="KW-0479">Metal-binding</keyword>
<keyword id="KW-0539">Nucleus</keyword>
<keyword id="KW-0597">Phosphoprotein</keyword>
<keyword id="KW-1185">Reference proteome</keyword>
<keyword id="KW-0677">Repeat</keyword>
<keyword id="KW-0804">Transcription</keyword>
<keyword id="KW-0805">Transcription regulation</keyword>
<keyword id="KW-0862">Zinc</keyword>
<keyword id="KW-0863">Zinc-finger</keyword>
<gene>
    <name type="primary">Jazf1</name>
</gene>
<accession>Q80ZQ5</accession>
<accession>Q8BLQ8</accession>
<accession>Q8BWN4</accession>
<protein>
    <recommendedName>
        <fullName>Juxtaposed with another zinc finger protein 1</fullName>
    </recommendedName>
</protein>